<dbReference type="EC" id="2.7.11.-" evidence="1"/>
<dbReference type="EC" id="2.7.4.-" evidence="1"/>
<dbReference type="EMBL" id="BX640413">
    <property type="protein sequence ID" value="CAE41004.1"/>
    <property type="molecule type" value="Genomic_DNA"/>
</dbReference>
<dbReference type="RefSeq" id="NP_879527.1">
    <property type="nucleotide sequence ID" value="NC_002929.2"/>
</dbReference>
<dbReference type="RefSeq" id="WP_010929965.1">
    <property type="nucleotide sequence ID" value="NZ_CP039022.1"/>
</dbReference>
<dbReference type="SMR" id="Q7U365"/>
<dbReference type="STRING" id="257313.BP0693"/>
<dbReference type="PaxDb" id="257313-BP0693"/>
<dbReference type="GeneID" id="69603271"/>
<dbReference type="KEGG" id="bpe:BP0693"/>
<dbReference type="PATRIC" id="fig|257313.5.peg.742"/>
<dbReference type="eggNOG" id="COG1493">
    <property type="taxonomic scope" value="Bacteria"/>
</dbReference>
<dbReference type="HOGENOM" id="CLU_052030_0_2_4"/>
<dbReference type="Proteomes" id="UP000002676">
    <property type="component" value="Chromosome"/>
</dbReference>
<dbReference type="GO" id="GO:0005524">
    <property type="term" value="F:ATP binding"/>
    <property type="evidence" value="ECO:0007669"/>
    <property type="project" value="UniProtKB-UniRule"/>
</dbReference>
<dbReference type="GO" id="GO:0000287">
    <property type="term" value="F:magnesium ion binding"/>
    <property type="evidence" value="ECO:0007669"/>
    <property type="project" value="UniProtKB-UniRule"/>
</dbReference>
<dbReference type="GO" id="GO:0000155">
    <property type="term" value="F:phosphorelay sensor kinase activity"/>
    <property type="evidence" value="ECO:0007669"/>
    <property type="project" value="InterPro"/>
</dbReference>
<dbReference type="GO" id="GO:0004674">
    <property type="term" value="F:protein serine/threonine kinase activity"/>
    <property type="evidence" value="ECO:0007669"/>
    <property type="project" value="UniProtKB-KW"/>
</dbReference>
<dbReference type="GO" id="GO:0004712">
    <property type="term" value="F:protein serine/threonine/tyrosine kinase activity"/>
    <property type="evidence" value="ECO:0007669"/>
    <property type="project" value="UniProtKB-UniRule"/>
</dbReference>
<dbReference type="GO" id="GO:0006109">
    <property type="term" value="P:regulation of carbohydrate metabolic process"/>
    <property type="evidence" value="ECO:0007669"/>
    <property type="project" value="UniProtKB-UniRule"/>
</dbReference>
<dbReference type="CDD" id="cd01918">
    <property type="entry name" value="HprK_C"/>
    <property type="match status" value="1"/>
</dbReference>
<dbReference type="FunFam" id="3.40.50.300:FF:000174">
    <property type="entry name" value="HPr kinase/phosphorylase"/>
    <property type="match status" value="1"/>
</dbReference>
<dbReference type="Gene3D" id="3.40.1390.20">
    <property type="entry name" value="HprK N-terminal domain-like"/>
    <property type="match status" value="1"/>
</dbReference>
<dbReference type="Gene3D" id="3.40.50.300">
    <property type="entry name" value="P-loop containing nucleotide triphosphate hydrolases"/>
    <property type="match status" value="1"/>
</dbReference>
<dbReference type="HAMAP" id="MF_01249">
    <property type="entry name" value="HPr_kinase"/>
    <property type="match status" value="1"/>
</dbReference>
<dbReference type="InterPro" id="IPR003755">
    <property type="entry name" value="HPr(Ser)_kin/Pase"/>
</dbReference>
<dbReference type="InterPro" id="IPR011104">
    <property type="entry name" value="Hpr_kin/Pase_C"/>
</dbReference>
<dbReference type="InterPro" id="IPR011126">
    <property type="entry name" value="Hpr_kin/Pase_Hpr_N"/>
</dbReference>
<dbReference type="InterPro" id="IPR027417">
    <property type="entry name" value="P-loop_NTPase"/>
</dbReference>
<dbReference type="InterPro" id="IPR028979">
    <property type="entry name" value="Ser_kin/Pase_Hpr-like_N_sf"/>
</dbReference>
<dbReference type="NCBIfam" id="TIGR00679">
    <property type="entry name" value="hpr-ser"/>
    <property type="match status" value="1"/>
</dbReference>
<dbReference type="PANTHER" id="PTHR30305:SF1">
    <property type="entry name" value="HPR KINASE_PHOSPHORYLASE"/>
    <property type="match status" value="1"/>
</dbReference>
<dbReference type="PANTHER" id="PTHR30305">
    <property type="entry name" value="PROTEIN YJDM-RELATED"/>
    <property type="match status" value="1"/>
</dbReference>
<dbReference type="Pfam" id="PF07475">
    <property type="entry name" value="Hpr_kinase_C"/>
    <property type="match status" value="1"/>
</dbReference>
<dbReference type="Pfam" id="PF02603">
    <property type="entry name" value="Hpr_kinase_N"/>
    <property type="match status" value="1"/>
</dbReference>
<dbReference type="SUPFAM" id="SSF75138">
    <property type="entry name" value="HprK N-terminal domain-like"/>
    <property type="match status" value="1"/>
</dbReference>
<dbReference type="SUPFAM" id="SSF53795">
    <property type="entry name" value="PEP carboxykinase-like"/>
    <property type="match status" value="1"/>
</dbReference>
<keyword id="KW-0067">ATP-binding</keyword>
<keyword id="KW-0418">Kinase</keyword>
<keyword id="KW-0460">Magnesium</keyword>
<keyword id="KW-0479">Metal-binding</keyword>
<keyword id="KW-0511">Multifunctional enzyme</keyword>
<keyword id="KW-0547">Nucleotide-binding</keyword>
<keyword id="KW-1185">Reference proteome</keyword>
<keyword id="KW-0723">Serine/threonine-protein kinase</keyword>
<keyword id="KW-0808">Transferase</keyword>
<organism>
    <name type="scientific">Bordetella pertussis (strain Tohama I / ATCC BAA-589 / NCTC 13251)</name>
    <dbReference type="NCBI Taxonomy" id="257313"/>
    <lineage>
        <taxon>Bacteria</taxon>
        <taxon>Pseudomonadati</taxon>
        <taxon>Pseudomonadota</taxon>
        <taxon>Betaproteobacteria</taxon>
        <taxon>Burkholderiales</taxon>
        <taxon>Alcaligenaceae</taxon>
        <taxon>Bordetella</taxon>
    </lineage>
</organism>
<feature type="chain" id="PRO_0000058949" description="HPr kinase/phosphorylase">
    <location>
        <begin position="1"/>
        <end position="308"/>
    </location>
</feature>
<feature type="region of interest" description="Important for the catalytic mechanism of both phosphorylation and dephosphorylation" evidence="1">
    <location>
        <begin position="201"/>
        <end position="210"/>
    </location>
</feature>
<feature type="region of interest" description="Important for the catalytic mechanism of dephosphorylation" evidence="1">
    <location>
        <begin position="264"/>
        <end position="269"/>
    </location>
</feature>
<feature type="active site" evidence="1">
    <location>
        <position position="138"/>
    </location>
</feature>
<feature type="active site" evidence="1">
    <location>
        <position position="159"/>
    </location>
</feature>
<feature type="active site" description="Proton acceptor; for phosphorylation activity. Proton donor; for dephosphorylation activity" evidence="1">
    <location>
        <position position="177"/>
    </location>
</feature>
<feature type="active site" evidence="1">
    <location>
        <position position="243"/>
    </location>
</feature>
<feature type="binding site" evidence="1">
    <location>
        <begin position="153"/>
        <end position="160"/>
    </location>
    <ligand>
        <name>ATP</name>
        <dbReference type="ChEBI" id="CHEBI:30616"/>
    </ligand>
</feature>
<feature type="binding site" evidence="1">
    <location>
        <position position="160"/>
    </location>
    <ligand>
        <name>Mg(2+)</name>
        <dbReference type="ChEBI" id="CHEBI:18420"/>
    </ligand>
</feature>
<feature type="binding site" evidence="1">
    <location>
        <position position="202"/>
    </location>
    <ligand>
        <name>Mg(2+)</name>
        <dbReference type="ChEBI" id="CHEBI:18420"/>
    </ligand>
</feature>
<reference key="1">
    <citation type="journal article" date="2003" name="Nat. Genet.">
        <title>Comparative analysis of the genome sequences of Bordetella pertussis, Bordetella parapertussis and Bordetella bronchiseptica.</title>
        <authorList>
            <person name="Parkhill J."/>
            <person name="Sebaihia M."/>
            <person name="Preston A."/>
            <person name="Murphy L.D."/>
            <person name="Thomson N.R."/>
            <person name="Harris D.E."/>
            <person name="Holden M.T.G."/>
            <person name="Churcher C.M."/>
            <person name="Bentley S.D."/>
            <person name="Mungall K.L."/>
            <person name="Cerdeno-Tarraga A.-M."/>
            <person name="Temple L."/>
            <person name="James K.D."/>
            <person name="Harris B."/>
            <person name="Quail M.A."/>
            <person name="Achtman M."/>
            <person name="Atkin R."/>
            <person name="Baker S."/>
            <person name="Basham D."/>
            <person name="Bason N."/>
            <person name="Cherevach I."/>
            <person name="Chillingworth T."/>
            <person name="Collins M."/>
            <person name="Cronin A."/>
            <person name="Davis P."/>
            <person name="Doggett J."/>
            <person name="Feltwell T."/>
            <person name="Goble A."/>
            <person name="Hamlin N."/>
            <person name="Hauser H."/>
            <person name="Holroyd S."/>
            <person name="Jagels K."/>
            <person name="Leather S."/>
            <person name="Moule S."/>
            <person name="Norberczak H."/>
            <person name="O'Neil S."/>
            <person name="Ormond D."/>
            <person name="Price C."/>
            <person name="Rabbinowitsch E."/>
            <person name="Rutter S."/>
            <person name="Sanders M."/>
            <person name="Saunders D."/>
            <person name="Seeger K."/>
            <person name="Sharp S."/>
            <person name="Simmonds M."/>
            <person name="Skelton J."/>
            <person name="Squares R."/>
            <person name="Squares S."/>
            <person name="Stevens K."/>
            <person name="Unwin L."/>
            <person name="Whitehead S."/>
            <person name="Barrell B.G."/>
            <person name="Maskell D.J."/>
        </authorList>
    </citation>
    <scope>NUCLEOTIDE SEQUENCE [LARGE SCALE GENOMIC DNA]</scope>
    <source>
        <strain>Tohama I / ATCC BAA-589 / NCTC 13251</strain>
    </source>
</reference>
<accession>Q7U365</accession>
<protein>
    <recommendedName>
        <fullName evidence="1">HPr kinase/phosphorylase</fullName>
        <shortName evidence="1">HPrK/P</shortName>
        <ecNumber evidence="1">2.7.11.-</ecNumber>
        <ecNumber evidence="1">2.7.4.-</ecNumber>
    </recommendedName>
    <alternativeName>
        <fullName evidence="1">HPr(Ser) kinase/phosphorylase</fullName>
    </alternativeName>
</protein>
<sequence>MLTVQELVDDNADKIPFSWIAGHDAADRAISDDGMAAADLVGHLNLIHPSRIQVFGQEELAYYTRFDLRRRMHHMDELLIGGVPAILLADGLTPPQDLIDQCAQHQVPLLSTPVAAAQLIDLLRIYLGKKLAPTTTVHGVFLDVLGLGVLITGESGLGKSELALELISRGHGLVADDAVELSRTAPGVIEGHCPQLLQNLLEVRGLGLLDIRTIFGETSVRRKMRLKLIVHLVRATAQDKFERLPLQDITQDMLGLPIRKVMLQVAAGRNLAVLVEAAVRNTILKLRGIDTLGEFMERQAMAILQSSK</sequence>
<name>HPRK_BORPE</name>
<evidence type="ECO:0000255" key="1">
    <source>
        <dbReference type="HAMAP-Rule" id="MF_01249"/>
    </source>
</evidence>
<gene>
    <name evidence="1" type="primary">hprK</name>
    <name type="ordered locus">BP0693</name>
</gene>
<proteinExistence type="inferred from homology"/>
<comment type="function">
    <text evidence="1">Catalyzes the ATP- as well as the pyrophosphate-dependent phosphorylation of a specific serine residue in HPr, a phosphocarrier protein of the phosphoenolpyruvate-dependent sugar phosphotransferase system (PTS). HprK/P also catalyzes the pyrophosphate-producing, inorganic phosphate-dependent dephosphorylation (phosphorolysis) of seryl-phosphorylated HPr (P-Ser-HPr).</text>
</comment>
<comment type="catalytic activity">
    <reaction evidence="1">
        <text>[HPr protein]-L-serine + ATP = [HPr protein]-O-phospho-L-serine + ADP + H(+)</text>
        <dbReference type="Rhea" id="RHEA:46600"/>
        <dbReference type="Rhea" id="RHEA-COMP:11602"/>
        <dbReference type="Rhea" id="RHEA-COMP:11603"/>
        <dbReference type="ChEBI" id="CHEBI:15378"/>
        <dbReference type="ChEBI" id="CHEBI:29999"/>
        <dbReference type="ChEBI" id="CHEBI:30616"/>
        <dbReference type="ChEBI" id="CHEBI:83421"/>
        <dbReference type="ChEBI" id="CHEBI:456216"/>
    </reaction>
</comment>
<comment type="catalytic activity">
    <reaction evidence="1">
        <text>[HPr protein]-O-phospho-L-serine + phosphate + H(+) = [HPr protein]-L-serine + diphosphate</text>
        <dbReference type="Rhea" id="RHEA:46604"/>
        <dbReference type="Rhea" id="RHEA-COMP:11602"/>
        <dbReference type="Rhea" id="RHEA-COMP:11603"/>
        <dbReference type="ChEBI" id="CHEBI:15378"/>
        <dbReference type="ChEBI" id="CHEBI:29999"/>
        <dbReference type="ChEBI" id="CHEBI:33019"/>
        <dbReference type="ChEBI" id="CHEBI:43474"/>
        <dbReference type="ChEBI" id="CHEBI:83421"/>
    </reaction>
</comment>
<comment type="cofactor">
    <cofactor evidence="1">
        <name>Mg(2+)</name>
        <dbReference type="ChEBI" id="CHEBI:18420"/>
    </cofactor>
</comment>
<comment type="subunit">
    <text evidence="1">Homohexamer.</text>
</comment>
<comment type="domain">
    <text evidence="1">The Walker A ATP-binding motif also binds Pi and PPi.</text>
</comment>
<comment type="miscellaneous">
    <text evidence="1">Both phosphorylation and phosphorolysis are carried out by the same active site and suggest a common mechanism for both reactions.</text>
</comment>
<comment type="similarity">
    <text evidence="1">Belongs to the HPrK/P family.</text>
</comment>